<comment type="function">
    <text evidence="1">Binds to the 23S rRNA.</text>
</comment>
<comment type="similarity">
    <text evidence="1">Belongs to the bacterial ribosomal protein bL9 family.</text>
</comment>
<reference key="1">
    <citation type="journal article" date="2009" name="J. Bacteriol.">
        <title>Complete and draft genome sequences of six members of the Aquificales.</title>
        <authorList>
            <person name="Reysenbach A.-L."/>
            <person name="Hamamura N."/>
            <person name="Podar M."/>
            <person name="Griffiths E."/>
            <person name="Ferreira S."/>
            <person name="Hochstein R."/>
            <person name="Heidelberg J."/>
            <person name="Johnson J."/>
            <person name="Mead D."/>
            <person name="Pohorille A."/>
            <person name="Sarmiento M."/>
            <person name="Schweighofer K."/>
            <person name="Seshadri R."/>
            <person name="Voytek M.A."/>
        </authorList>
    </citation>
    <scope>NUCLEOTIDE SEQUENCE [LARGE SCALE GENOMIC DNA]</scope>
    <source>
        <strain>DSM 14350 / EX-H1</strain>
    </source>
</reference>
<proteinExistence type="inferred from homology"/>
<sequence>MKVILTKDVEGWGTIGDIIDVKRGFARNYLIPKGFALEATESHIKHVQEILKQKARKLEREKAKAEEIAKQLEGLEIEIKKSVGTTGKLFGSVTTSDIAEVLKEKGIEVEKKKIMLRNPIKNIGSYNITIRLHPQVSATIKVHVTPENI</sequence>
<feature type="chain" id="PRO_1000196258" description="Large ribosomal subunit protein bL9">
    <location>
        <begin position="1"/>
        <end position="149"/>
    </location>
</feature>
<dbReference type="EMBL" id="CP001230">
    <property type="protein sequence ID" value="ACO03372.1"/>
    <property type="molecule type" value="Genomic_DNA"/>
</dbReference>
<dbReference type="RefSeq" id="WP_012675611.1">
    <property type="nucleotide sequence ID" value="NC_012440.1"/>
</dbReference>
<dbReference type="SMR" id="C0QQX0"/>
<dbReference type="STRING" id="123214.PERMA_1294"/>
<dbReference type="PaxDb" id="123214-PERMA_1294"/>
<dbReference type="KEGG" id="pmx:PERMA_1294"/>
<dbReference type="eggNOG" id="COG0359">
    <property type="taxonomic scope" value="Bacteria"/>
</dbReference>
<dbReference type="HOGENOM" id="CLU_078938_3_0_0"/>
<dbReference type="OrthoDB" id="9788336at2"/>
<dbReference type="Proteomes" id="UP000001366">
    <property type="component" value="Chromosome"/>
</dbReference>
<dbReference type="GO" id="GO:1990904">
    <property type="term" value="C:ribonucleoprotein complex"/>
    <property type="evidence" value="ECO:0007669"/>
    <property type="project" value="UniProtKB-KW"/>
</dbReference>
<dbReference type="GO" id="GO:0005840">
    <property type="term" value="C:ribosome"/>
    <property type="evidence" value="ECO:0007669"/>
    <property type="project" value="UniProtKB-KW"/>
</dbReference>
<dbReference type="GO" id="GO:0019843">
    <property type="term" value="F:rRNA binding"/>
    <property type="evidence" value="ECO:0007669"/>
    <property type="project" value="UniProtKB-UniRule"/>
</dbReference>
<dbReference type="GO" id="GO:0003735">
    <property type="term" value="F:structural constituent of ribosome"/>
    <property type="evidence" value="ECO:0007669"/>
    <property type="project" value="InterPro"/>
</dbReference>
<dbReference type="GO" id="GO:0006412">
    <property type="term" value="P:translation"/>
    <property type="evidence" value="ECO:0007669"/>
    <property type="project" value="UniProtKB-UniRule"/>
</dbReference>
<dbReference type="FunFam" id="3.10.430.100:FF:000006">
    <property type="entry name" value="50S ribosomal protein L9"/>
    <property type="match status" value="1"/>
</dbReference>
<dbReference type="Gene3D" id="3.10.430.100">
    <property type="entry name" value="Ribosomal protein L9, C-terminal domain"/>
    <property type="match status" value="1"/>
</dbReference>
<dbReference type="Gene3D" id="3.40.5.10">
    <property type="entry name" value="Ribosomal protein L9, N-terminal domain"/>
    <property type="match status" value="1"/>
</dbReference>
<dbReference type="HAMAP" id="MF_00503">
    <property type="entry name" value="Ribosomal_bL9"/>
    <property type="match status" value="1"/>
</dbReference>
<dbReference type="InterPro" id="IPR000244">
    <property type="entry name" value="Ribosomal_bL9"/>
</dbReference>
<dbReference type="InterPro" id="IPR009027">
    <property type="entry name" value="Ribosomal_bL9/RNase_H1_N"/>
</dbReference>
<dbReference type="InterPro" id="IPR020594">
    <property type="entry name" value="Ribosomal_bL9_bac/chp"/>
</dbReference>
<dbReference type="InterPro" id="IPR020069">
    <property type="entry name" value="Ribosomal_bL9_C"/>
</dbReference>
<dbReference type="InterPro" id="IPR036791">
    <property type="entry name" value="Ribosomal_bL9_C_sf"/>
</dbReference>
<dbReference type="InterPro" id="IPR020070">
    <property type="entry name" value="Ribosomal_bL9_N"/>
</dbReference>
<dbReference type="InterPro" id="IPR036935">
    <property type="entry name" value="Ribosomal_bL9_N_sf"/>
</dbReference>
<dbReference type="NCBIfam" id="TIGR00158">
    <property type="entry name" value="L9"/>
    <property type="match status" value="1"/>
</dbReference>
<dbReference type="PANTHER" id="PTHR21368">
    <property type="entry name" value="50S RIBOSOMAL PROTEIN L9"/>
    <property type="match status" value="1"/>
</dbReference>
<dbReference type="Pfam" id="PF03948">
    <property type="entry name" value="Ribosomal_L9_C"/>
    <property type="match status" value="1"/>
</dbReference>
<dbReference type="Pfam" id="PF01281">
    <property type="entry name" value="Ribosomal_L9_N"/>
    <property type="match status" value="1"/>
</dbReference>
<dbReference type="SUPFAM" id="SSF55658">
    <property type="entry name" value="L9 N-domain-like"/>
    <property type="match status" value="1"/>
</dbReference>
<dbReference type="SUPFAM" id="SSF55653">
    <property type="entry name" value="Ribosomal protein L9 C-domain"/>
    <property type="match status" value="1"/>
</dbReference>
<dbReference type="PROSITE" id="PS00651">
    <property type="entry name" value="RIBOSOMAL_L9"/>
    <property type="match status" value="1"/>
</dbReference>
<name>RL9_PERMH</name>
<evidence type="ECO:0000255" key="1">
    <source>
        <dbReference type="HAMAP-Rule" id="MF_00503"/>
    </source>
</evidence>
<evidence type="ECO:0000305" key="2"/>
<organism>
    <name type="scientific">Persephonella marina (strain DSM 14350 / EX-H1)</name>
    <dbReference type="NCBI Taxonomy" id="123214"/>
    <lineage>
        <taxon>Bacteria</taxon>
        <taxon>Pseudomonadati</taxon>
        <taxon>Aquificota</taxon>
        <taxon>Aquificia</taxon>
        <taxon>Aquificales</taxon>
        <taxon>Hydrogenothermaceae</taxon>
        <taxon>Persephonella</taxon>
    </lineage>
</organism>
<gene>
    <name evidence="1" type="primary">rplI</name>
    <name type="ordered locus">PERMA_1294</name>
</gene>
<accession>C0QQX0</accession>
<protein>
    <recommendedName>
        <fullName evidence="1">Large ribosomal subunit protein bL9</fullName>
    </recommendedName>
    <alternativeName>
        <fullName evidence="2">50S ribosomal protein L9</fullName>
    </alternativeName>
</protein>
<keyword id="KW-1185">Reference proteome</keyword>
<keyword id="KW-0687">Ribonucleoprotein</keyword>
<keyword id="KW-0689">Ribosomal protein</keyword>
<keyword id="KW-0694">RNA-binding</keyword>
<keyword id="KW-0699">rRNA-binding</keyword>